<reference key="1">
    <citation type="submission" date="2007-03" db="EMBL/GenBank/DDBJ databases">
        <title>Complete sequence of Prosthecochloris vibrioformis DSM 265.</title>
        <authorList>
            <consortium name="US DOE Joint Genome Institute"/>
            <person name="Copeland A."/>
            <person name="Lucas S."/>
            <person name="Lapidus A."/>
            <person name="Barry K."/>
            <person name="Detter J.C."/>
            <person name="Glavina del Rio T."/>
            <person name="Hammon N."/>
            <person name="Israni S."/>
            <person name="Pitluck S."/>
            <person name="Schmutz J."/>
            <person name="Larimer F."/>
            <person name="Land M."/>
            <person name="Hauser L."/>
            <person name="Mikhailova N."/>
            <person name="Li T."/>
            <person name="Overmann J."/>
            <person name="Schuster S.C."/>
            <person name="Bryant D.A."/>
            <person name="Richardson P."/>
        </authorList>
    </citation>
    <scope>NUCLEOTIDE SEQUENCE [LARGE SCALE GENOMIC DNA]</scope>
    <source>
        <strain>DSM 265 / 1930</strain>
    </source>
</reference>
<proteinExistence type="inferred from homology"/>
<comment type="function">
    <text evidence="1">Catalyzes the 2-thiolation of uridine at the wobble position (U34) of tRNA, leading to the formation of s(2)U34.</text>
</comment>
<comment type="catalytic activity">
    <reaction evidence="1">
        <text>S-sulfanyl-L-cysteinyl-[protein] + uridine(34) in tRNA + AH2 + ATP = 2-thiouridine(34) in tRNA + L-cysteinyl-[protein] + A + AMP + diphosphate + H(+)</text>
        <dbReference type="Rhea" id="RHEA:47032"/>
        <dbReference type="Rhea" id="RHEA-COMP:10131"/>
        <dbReference type="Rhea" id="RHEA-COMP:11726"/>
        <dbReference type="Rhea" id="RHEA-COMP:11727"/>
        <dbReference type="Rhea" id="RHEA-COMP:11728"/>
        <dbReference type="ChEBI" id="CHEBI:13193"/>
        <dbReference type="ChEBI" id="CHEBI:15378"/>
        <dbReference type="ChEBI" id="CHEBI:17499"/>
        <dbReference type="ChEBI" id="CHEBI:29950"/>
        <dbReference type="ChEBI" id="CHEBI:30616"/>
        <dbReference type="ChEBI" id="CHEBI:33019"/>
        <dbReference type="ChEBI" id="CHEBI:61963"/>
        <dbReference type="ChEBI" id="CHEBI:65315"/>
        <dbReference type="ChEBI" id="CHEBI:87170"/>
        <dbReference type="ChEBI" id="CHEBI:456215"/>
        <dbReference type="EC" id="2.8.1.13"/>
    </reaction>
</comment>
<comment type="subcellular location">
    <subcellularLocation>
        <location evidence="1">Cytoplasm</location>
    </subcellularLocation>
</comment>
<comment type="similarity">
    <text evidence="1">Belongs to the MnmA/TRMU family.</text>
</comment>
<accession>A4SD47</accession>
<name>MNMA_CHLPM</name>
<dbReference type="EC" id="2.8.1.13" evidence="1"/>
<dbReference type="EMBL" id="CP000607">
    <property type="protein sequence ID" value="ABP36406.1"/>
    <property type="molecule type" value="Genomic_DNA"/>
</dbReference>
<dbReference type="SMR" id="A4SD47"/>
<dbReference type="STRING" id="290318.Cvib_0384"/>
<dbReference type="KEGG" id="pvi:Cvib_0384"/>
<dbReference type="eggNOG" id="COG0482">
    <property type="taxonomic scope" value="Bacteria"/>
</dbReference>
<dbReference type="HOGENOM" id="CLU_035188_0_0_10"/>
<dbReference type="OrthoDB" id="9800696at2"/>
<dbReference type="GO" id="GO:0005737">
    <property type="term" value="C:cytoplasm"/>
    <property type="evidence" value="ECO:0007669"/>
    <property type="project" value="UniProtKB-SubCell"/>
</dbReference>
<dbReference type="GO" id="GO:0005524">
    <property type="term" value="F:ATP binding"/>
    <property type="evidence" value="ECO:0007669"/>
    <property type="project" value="UniProtKB-KW"/>
</dbReference>
<dbReference type="GO" id="GO:0000049">
    <property type="term" value="F:tRNA binding"/>
    <property type="evidence" value="ECO:0007669"/>
    <property type="project" value="UniProtKB-KW"/>
</dbReference>
<dbReference type="GO" id="GO:0103016">
    <property type="term" value="F:tRNA-uridine 2-sulfurtransferase activity"/>
    <property type="evidence" value="ECO:0007669"/>
    <property type="project" value="UniProtKB-EC"/>
</dbReference>
<dbReference type="GO" id="GO:0002143">
    <property type="term" value="P:tRNA wobble position uridine thiolation"/>
    <property type="evidence" value="ECO:0007669"/>
    <property type="project" value="TreeGrafter"/>
</dbReference>
<dbReference type="CDD" id="cd01998">
    <property type="entry name" value="MnmA_TRMU-like"/>
    <property type="match status" value="1"/>
</dbReference>
<dbReference type="FunFam" id="2.40.30.10:FF:000023">
    <property type="entry name" value="tRNA-specific 2-thiouridylase MnmA"/>
    <property type="match status" value="1"/>
</dbReference>
<dbReference type="Gene3D" id="2.30.30.280">
    <property type="entry name" value="Adenine nucleotide alpha hydrolases-like domains"/>
    <property type="match status" value="1"/>
</dbReference>
<dbReference type="Gene3D" id="3.40.50.620">
    <property type="entry name" value="HUPs"/>
    <property type="match status" value="1"/>
</dbReference>
<dbReference type="Gene3D" id="2.40.30.10">
    <property type="entry name" value="Translation factors"/>
    <property type="match status" value="1"/>
</dbReference>
<dbReference type="HAMAP" id="MF_00144">
    <property type="entry name" value="tRNA_thiouridyl_MnmA"/>
    <property type="match status" value="1"/>
</dbReference>
<dbReference type="InterPro" id="IPR004506">
    <property type="entry name" value="MnmA-like"/>
</dbReference>
<dbReference type="InterPro" id="IPR046885">
    <property type="entry name" value="MnmA-like_C"/>
</dbReference>
<dbReference type="InterPro" id="IPR046884">
    <property type="entry name" value="MnmA-like_central"/>
</dbReference>
<dbReference type="InterPro" id="IPR023382">
    <property type="entry name" value="MnmA-like_central_sf"/>
</dbReference>
<dbReference type="InterPro" id="IPR014729">
    <property type="entry name" value="Rossmann-like_a/b/a_fold"/>
</dbReference>
<dbReference type="NCBIfam" id="NF001138">
    <property type="entry name" value="PRK00143.1"/>
    <property type="match status" value="1"/>
</dbReference>
<dbReference type="NCBIfam" id="TIGR00420">
    <property type="entry name" value="trmU"/>
    <property type="match status" value="1"/>
</dbReference>
<dbReference type="PANTHER" id="PTHR11933:SF5">
    <property type="entry name" value="MITOCHONDRIAL TRNA-SPECIFIC 2-THIOURIDYLASE 1"/>
    <property type="match status" value="1"/>
</dbReference>
<dbReference type="PANTHER" id="PTHR11933">
    <property type="entry name" value="TRNA 5-METHYLAMINOMETHYL-2-THIOURIDYLATE -METHYLTRANSFERASE"/>
    <property type="match status" value="1"/>
</dbReference>
<dbReference type="Pfam" id="PF03054">
    <property type="entry name" value="tRNA_Me_trans"/>
    <property type="match status" value="1"/>
</dbReference>
<dbReference type="Pfam" id="PF20258">
    <property type="entry name" value="tRNA_Me_trans_C"/>
    <property type="match status" value="1"/>
</dbReference>
<dbReference type="Pfam" id="PF20259">
    <property type="entry name" value="tRNA_Me_trans_M"/>
    <property type="match status" value="1"/>
</dbReference>
<dbReference type="SUPFAM" id="SSF52402">
    <property type="entry name" value="Adenine nucleotide alpha hydrolases-like"/>
    <property type="match status" value="1"/>
</dbReference>
<organism>
    <name type="scientific">Chlorobium phaeovibrioides (strain DSM 265 / 1930)</name>
    <name type="common">Prosthecochloris vibrioformis (strain DSM 265)</name>
    <dbReference type="NCBI Taxonomy" id="290318"/>
    <lineage>
        <taxon>Bacteria</taxon>
        <taxon>Pseudomonadati</taxon>
        <taxon>Chlorobiota</taxon>
        <taxon>Chlorobiia</taxon>
        <taxon>Chlorobiales</taxon>
        <taxon>Chlorobiaceae</taxon>
        <taxon>Chlorobium/Pelodictyon group</taxon>
        <taxon>Chlorobium</taxon>
    </lineage>
</organism>
<evidence type="ECO:0000255" key="1">
    <source>
        <dbReference type="HAMAP-Rule" id="MF_00144"/>
    </source>
</evidence>
<protein>
    <recommendedName>
        <fullName evidence="1">tRNA-specific 2-thiouridylase MnmA</fullName>
        <ecNumber evidence="1">2.8.1.13</ecNumber>
    </recommendedName>
</protein>
<gene>
    <name evidence="1" type="primary">mnmA</name>
    <name type="ordered locus">Cvib_0384</name>
</gene>
<sequence length="357" mass="39462">MKQETTVLVGISGGVDSAVAACMLVDEGYRVIGLNIKVLDSPESNPALQPSSLVISNREEFRIPVYTLNLSKRFREDVIGYFQEEYLAARTPNPCIVCNKKIKWAGLLEAADMLNADLVATGHYASTAFLGGRCRLYQGADKKKDQSYFLWMLQQKELLKTILPLGTLAKPEVRELARSYGVPAAEKKESQEICFVPGDDYCRYLEQAIPDLAERVRGGELVDASGRVIGHHRGYPFYTIGQRRGLGASTGEPIYVTSIDPVHNRIHTGKKTDLLSRELTASGMNWIGIEPPKKPFEATARIRYRDAPTPCRVTPLEDNRATISFHSPKSAITRGQAAVIYRDDEVLGGGSIVETTQ</sequence>
<keyword id="KW-0067">ATP-binding</keyword>
<keyword id="KW-0963">Cytoplasm</keyword>
<keyword id="KW-1015">Disulfide bond</keyword>
<keyword id="KW-0547">Nucleotide-binding</keyword>
<keyword id="KW-0694">RNA-binding</keyword>
<keyword id="KW-0808">Transferase</keyword>
<keyword id="KW-0819">tRNA processing</keyword>
<keyword id="KW-0820">tRNA-binding</keyword>
<feature type="chain" id="PRO_0000349754" description="tRNA-specific 2-thiouridylase MnmA">
    <location>
        <begin position="1"/>
        <end position="357"/>
    </location>
</feature>
<feature type="region of interest" description="Interaction with tRNA" evidence="1">
    <location>
        <begin position="144"/>
        <end position="146"/>
    </location>
</feature>
<feature type="region of interest" description="Interaction with tRNA" evidence="1">
    <location>
        <begin position="303"/>
        <end position="304"/>
    </location>
</feature>
<feature type="active site" description="Nucleophile" evidence="1">
    <location>
        <position position="98"/>
    </location>
</feature>
<feature type="active site" description="Cysteine persulfide intermediate" evidence="1">
    <location>
        <position position="194"/>
    </location>
</feature>
<feature type="binding site" evidence="1">
    <location>
        <begin position="10"/>
        <end position="17"/>
    </location>
    <ligand>
        <name>ATP</name>
        <dbReference type="ChEBI" id="CHEBI:30616"/>
    </ligand>
</feature>
<feature type="binding site" evidence="1">
    <location>
        <position position="36"/>
    </location>
    <ligand>
        <name>ATP</name>
        <dbReference type="ChEBI" id="CHEBI:30616"/>
    </ligand>
</feature>
<feature type="binding site" evidence="1">
    <location>
        <position position="122"/>
    </location>
    <ligand>
        <name>ATP</name>
        <dbReference type="ChEBI" id="CHEBI:30616"/>
    </ligand>
</feature>
<feature type="site" description="Interaction with tRNA" evidence="1">
    <location>
        <position position="123"/>
    </location>
</feature>
<feature type="site" description="Interaction with tRNA" evidence="1">
    <location>
        <position position="336"/>
    </location>
</feature>
<feature type="disulfide bond" description="Alternate" evidence="1">
    <location>
        <begin position="98"/>
        <end position="194"/>
    </location>
</feature>